<feature type="chain" id="PRO_0000209160" description="Protein Smg homolog">
    <location>
        <begin position="1"/>
        <end position="154"/>
    </location>
</feature>
<organism>
    <name type="scientific">Aromatoleum aromaticum (strain DSM 19018 / LMG 30748 / EbN1)</name>
    <name type="common">Azoarcus sp. (strain EbN1)</name>
    <dbReference type="NCBI Taxonomy" id="76114"/>
    <lineage>
        <taxon>Bacteria</taxon>
        <taxon>Pseudomonadati</taxon>
        <taxon>Pseudomonadota</taxon>
        <taxon>Betaproteobacteria</taxon>
        <taxon>Rhodocyclales</taxon>
        <taxon>Rhodocyclaceae</taxon>
        <taxon>Aromatoleum</taxon>
    </lineage>
</organism>
<accession>Q5P4H2</accession>
<keyword id="KW-1185">Reference proteome</keyword>
<comment type="similarity">
    <text evidence="1">Belongs to the Smg family.</text>
</comment>
<comment type="sequence caution" evidence="2">
    <conflict type="erroneous initiation">
        <sequence resource="EMBL-CDS" id="CAI07791"/>
    </conflict>
</comment>
<reference key="1">
    <citation type="journal article" date="2005" name="Arch. Microbiol.">
        <title>The genome sequence of an anaerobic aromatic-degrading denitrifying bacterium, strain EbN1.</title>
        <authorList>
            <person name="Rabus R."/>
            <person name="Kube M."/>
            <person name="Heider J."/>
            <person name="Beck A."/>
            <person name="Heitmann K."/>
            <person name="Widdel F."/>
            <person name="Reinhardt R."/>
        </authorList>
    </citation>
    <scope>NUCLEOTIDE SEQUENCE [LARGE SCALE GENOMIC DNA]</scope>
    <source>
        <strain>DSM 19018 / LMG 30748 / EbN1</strain>
    </source>
</reference>
<evidence type="ECO:0000255" key="1">
    <source>
        <dbReference type="HAMAP-Rule" id="MF_00598"/>
    </source>
</evidence>
<evidence type="ECO:0000305" key="2"/>
<sequence length="154" mass="17298">MFDILVYLFENYLHAAACPESEQLARKLSAAGFEEDEITEALDWLSGLRAIAVSPLAKVPQPDSIRLYAAEEQAKLDTSCRGFLAFLENAGALDPQTRELIIERTMAVDGFHVNLHRFKVIVLMVLWQQEQPLDSLILDELLTDEAEELAPVLQ</sequence>
<name>SMG_AROAE</name>
<gene>
    <name evidence="1" type="primary">smg</name>
    <name type="ordered locus">AZOSEA16660</name>
    <name type="ORF">ebA2962</name>
</gene>
<proteinExistence type="inferred from homology"/>
<dbReference type="EMBL" id="CR555306">
    <property type="protein sequence ID" value="CAI07791.1"/>
    <property type="status" value="ALT_INIT"/>
    <property type="molecule type" value="Genomic_DNA"/>
</dbReference>
<dbReference type="RefSeq" id="WP_041647065.1">
    <property type="nucleotide sequence ID" value="NC_006513.1"/>
</dbReference>
<dbReference type="SMR" id="Q5P4H2"/>
<dbReference type="STRING" id="76114.ebA2962"/>
<dbReference type="KEGG" id="eba:ebA2962"/>
<dbReference type="eggNOG" id="COG2922">
    <property type="taxonomic scope" value="Bacteria"/>
</dbReference>
<dbReference type="HOGENOM" id="CLU_133242_0_0_4"/>
<dbReference type="OrthoDB" id="5297467at2"/>
<dbReference type="Proteomes" id="UP000006552">
    <property type="component" value="Chromosome"/>
</dbReference>
<dbReference type="HAMAP" id="MF_00598">
    <property type="entry name" value="Smg"/>
    <property type="match status" value="1"/>
</dbReference>
<dbReference type="InterPro" id="IPR007456">
    <property type="entry name" value="Smg"/>
</dbReference>
<dbReference type="PANTHER" id="PTHR38692">
    <property type="entry name" value="PROTEIN SMG"/>
    <property type="match status" value="1"/>
</dbReference>
<dbReference type="PANTHER" id="PTHR38692:SF1">
    <property type="entry name" value="PROTEIN SMG"/>
    <property type="match status" value="1"/>
</dbReference>
<dbReference type="Pfam" id="PF04361">
    <property type="entry name" value="DUF494"/>
    <property type="match status" value="1"/>
</dbReference>
<protein>
    <recommendedName>
        <fullName evidence="1">Protein Smg homolog</fullName>
    </recommendedName>
</protein>